<gene>
    <name evidence="1" type="primary">cmk</name>
    <name type="ordered locus">RPB_0641</name>
</gene>
<dbReference type="EC" id="2.7.4.25" evidence="1"/>
<dbReference type="EMBL" id="CP000250">
    <property type="protein sequence ID" value="ABD05352.1"/>
    <property type="molecule type" value="Genomic_DNA"/>
</dbReference>
<dbReference type="RefSeq" id="WP_011439542.1">
    <property type="nucleotide sequence ID" value="NC_007778.1"/>
</dbReference>
<dbReference type="SMR" id="Q2J2F8"/>
<dbReference type="STRING" id="316058.RPB_0641"/>
<dbReference type="KEGG" id="rpb:RPB_0641"/>
<dbReference type="eggNOG" id="COG0283">
    <property type="taxonomic scope" value="Bacteria"/>
</dbReference>
<dbReference type="HOGENOM" id="CLU_079959_0_1_5"/>
<dbReference type="OrthoDB" id="9807434at2"/>
<dbReference type="Proteomes" id="UP000008809">
    <property type="component" value="Chromosome"/>
</dbReference>
<dbReference type="GO" id="GO:0005737">
    <property type="term" value="C:cytoplasm"/>
    <property type="evidence" value="ECO:0007669"/>
    <property type="project" value="UniProtKB-SubCell"/>
</dbReference>
<dbReference type="GO" id="GO:0005524">
    <property type="term" value="F:ATP binding"/>
    <property type="evidence" value="ECO:0007669"/>
    <property type="project" value="UniProtKB-UniRule"/>
</dbReference>
<dbReference type="GO" id="GO:0036430">
    <property type="term" value="F:CMP kinase activity"/>
    <property type="evidence" value="ECO:0007669"/>
    <property type="project" value="RHEA"/>
</dbReference>
<dbReference type="GO" id="GO:0036431">
    <property type="term" value="F:dCMP kinase activity"/>
    <property type="evidence" value="ECO:0007669"/>
    <property type="project" value="RHEA"/>
</dbReference>
<dbReference type="GO" id="GO:0006220">
    <property type="term" value="P:pyrimidine nucleotide metabolic process"/>
    <property type="evidence" value="ECO:0007669"/>
    <property type="project" value="UniProtKB-UniRule"/>
</dbReference>
<dbReference type="CDD" id="cd02020">
    <property type="entry name" value="CMPK"/>
    <property type="match status" value="1"/>
</dbReference>
<dbReference type="Gene3D" id="3.40.50.300">
    <property type="entry name" value="P-loop containing nucleotide triphosphate hydrolases"/>
    <property type="match status" value="1"/>
</dbReference>
<dbReference type="HAMAP" id="MF_00238">
    <property type="entry name" value="Cytidyl_kinase_type1"/>
    <property type="match status" value="1"/>
</dbReference>
<dbReference type="InterPro" id="IPR003136">
    <property type="entry name" value="Cytidylate_kin"/>
</dbReference>
<dbReference type="InterPro" id="IPR011994">
    <property type="entry name" value="Cytidylate_kinase_dom"/>
</dbReference>
<dbReference type="InterPro" id="IPR027417">
    <property type="entry name" value="P-loop_NTPase"/>
</dbReference>
<dbReference type="NCBIfam" id="TIGR00017">
    <property type="entry name" value="cmk"/>
    <property type="match status" value="1"/>
</dbReference>
<dbReference type="Pfam" id="PF02224">
    <property type="entry name" value="Cytidylate_kin"/>
    <property type="match status" value="1"/>
</dbReference>
<dbReference type="SUPFAM" id="SSF52540">
    <property type="entry name" value="P-loop containing nucleoside triphosphate hydrolases"/>
    <property type="match status" value="1"/>
</dbReference>
<reference key="1">
    <citation type="submission" date="2006-01" db="EMBL/GenBank/DDBJ databases">
        <title>Complete sequence of Rhodopseudomonas palustris HaA2.</title>
        <authorList>
            <consortium name="US DOE Joint Genome Institute"/>
            <person name="Copeland A."/>
            <person name="Lucas S."/>
            <person name="Lapidus A."/>
            <person name="Barry K."/>
            <person name="Detter J.C."/>
            <person name="Glavina T."/>
            <person name="Hammon N."/>
            <person name="Israni S."/>
            <person name="Pitluck S."/>
            <person name="Chain P."/>
            <person name="Malfatti S."/>
            <person name="Shin M."/>
            <person name="Vergez L."/>
            <person name="Schmutz J."/>
            <person name="Larimer F."/>
            <person name="Land M."/>
            <person name="Hauser L."/>
            <person name="Pelletier D.A."/>
            <person name="Kyrpides N."/>
            <person name="Anderson I."/>
            <person name="Oda Y."/>
            <person name="Harwood C.S."/>
            <person name="Richardson P."/>
        </authorList>
    </citation>
    <scope>NUCLEOTIDE SEQUENCE [LARGE SCALE GENOMIC DNA]</scope>
    <source>
        <strain>HaA2</strain>
    </source>
</reference>
<sequence>MIIAIDGPAASGKGTLGKRLAAHYGFRHLDTGVIYRAVAKALLDGGADLTDQAQAIAAAQGLDPGLFGDPALKSQTVGDAASVISAYPKVREVLVGFQRQFAAEPPGAVLDGRDIGTVICPDADVKIFVVADPGVRARRRALEAQARGEPADEAVILADILRRDERDKGRSAAPLKQAPDAVLLDNSNLDIEGGVRAAIAIVEAVRAGRRRV</sequence>
<organism>
    <name type="scientific">Rhodopseudomonas palustris (strain HaA2)</name>
    <dbReference type="NCBI Taxonomy" id="316058"/>
    <lineage>
        <taxon>Bacteria</taxon>
        <taxon>Pseudomonadati</taxon>
        <taxon>Pseudomonadota</taxon>
        <taxon>Alphaproteobacteria</taxon>
        <taxon>Hyphomicrobiales</taxon>
        <taxon>Nitrobacteraceae</taxon>
        <taxon>Rhodopseudomonas</taxon>
    </lineage>
</organism>
<feature type="chain" id="PRO_1000048259" description="Cytidylate kinase">
    <location>
        <begin position="1"/>
        <end position="212"/>
    </location>
</feature>
<feature type="binding site" evidence="1">
    <location>
        <begin position="7"/>
        <end position="15"/>
    </location>
    <ligand>
        <name>ATP</name>
        <dbReference type="ChEBI" id="CHEBI:30616"/>
    </ligand>
</feature>
<accession>Q2J2F8</accession>
<name>KCY_RHOP2</name>
<keyword id="KW-0067">ATP-binding</keyword>
<keyword id="KW-0963">Cytoplasm</keyword>
<keyword id="KW-0418">Kinase</keyword>
<keyword id="KW-0547">Nucleotide-binding</keyword>
<keyword id="KW-1185">Reference proteome</keyword>
<keyword id="KW-0808">Transferase</keyword>
<protein>
    <recommendedName>
        <fullName evidence="1">Cytidylate kinase</fullName>
        <shortName evidence="1">CK</shortName>
        <ecNumber evidence="1">2.7.4.25</ecNumber>
    </recommendedName>
    <alternativeName>
        <fullName evidence="1">Cytidine monophosphate kinase</fullName>
        <shortName evidence="1">CMP kinase</shortName>
    </alternativeName>
</protein>
<comment type="catalytic activity">
    <reaction evidence="1">
        <text>CMP + ATP = CDP + ADP</text>
        <dbReference type="Rhea" id="RHEA:11600"/>
        <dbReference type="ChEBI" id="CHEBI:30616"/>
        <dbReference type="ChEBI" id="CHEBI:58069"/>
        <dbReference type="ChEBI" id="CHEBI:60377"/>
        <dbReference type="ChEBI" id="CHEBI:456216"/>
        <dbReference type="EC" id="2.7.4.25"/>
    </reaction>
</comment>
<comment type="catalytic activity">
    <reaction evidence="1">
        <text>dCMP + ATP = dCDP + ADP</text>
        <dbReference type="Rhea" id="RHEA:25094"/>
        <dbReference type="ChEBI" id="CHEBI:30616"/>
        <dbReference type="ChEBI" id="CHEBI:57566"/>
        <dbReference type="ChEBI" id="CHEBI:58593"/>
        <dbReference type="ChEBI" id="CHEBI:456216"/>
        <dbReference type="EC" id="2.7.4.25"/>
    </reaction>
</comment>
<comment type="subcellular location">
    <subcellularLocation>
        <location evidence="1">Cytoplasm</location>
    </subcellularLocation>
</comment>
<comment type="similarity">
    <text evidence="1">Belongs to the cytidylate kinase family. Type 1 subfamily.</text>
</comment>
<proteinExistence type="inferred from homology"/>
<evidence type="ECO:0000255" key="1">
    <source>
        <dbReference type="HAMAP-Rule" id="MF_00238"/>
    </source>
</evidence>